<evidence type="ECO:0000250" key="1"/>
<evidence type="ECO:0000255" key="2"/>
<evidence type="ECO:0000305" key="3"/>
<protein>
    <recommendedName>
        <fullName>CASP-like protein 1B2</fullName>
        <shortName>OsCASPL1B2</shortName>
    </recommendedName>
</protein>
<keyword id="KW-1003">Cell membrane</keyword>
<keyword id="KW-0472">Membrane</keyword>
<keyword id="KW-1185">Reference proteome</keyword>
<keyword id="KW-0812">Transmembrane</keyword>
<keyword id="KW-1133">Transmembrane helix</keyword>
<accession>B8BMY7</accession>
<organism>
    <name type="scientific">Oryza sativa subsp. indica</name>
    <name type="common">Rice</name>
    <dbReference type="NCBI Taxonomy" id="39946"/>
    <lineage>
        <taxon>Eukaryota</taxon>
        <taxon>Viridiplantae</taxon>
        <taxon>Streptophyta</taxon>
        <taxon>Embryophyta</taxon>
        <taxon>Tracheophyta</taxon>
        <taxon>Spermatophyta</taxon>
        <taxon>Magnoliopsida</taxon>
        <taxon>Liliopsida</taxon>
        <taxon>Poales</taxon>
        <taxon>Poaceae</taxon>
        <taxon>BOP clade</taxon>
        <taxon>Oryzoideae</taxon>
        <taxon>Oryzeae</taxon>
        <taxon>Oryzinae</taxon>
        <taxon>Oryza</taxon>
        <taxon>Oryza sativa</taxon>
    </lineage>
</organism>
<feature type="chain" id="PRO_0000412022" description="CASP-like protein 1B2">
    <location>
        <begin position="1"/>
        <end position="195"/>
    </location>
</feature>
<feature type="topological domain" description="Cytoplasmic" evidence="2">
    <location>
        <begin position="1"/>
        <end position="25"/>
    </location>
</feature>
<feature type="transmembrane region" description="Helical" evidence="2">
    <location>
        <begin position="26"/>
        <end position="46"/>
    </location>
</feature>
<feature type="topological domain" description="Extracellular" evidence="2">
    <location>
        <begin position="47"/>
        <end position="78"/>
    </location>
</feature>
<feature type="transmembrane region" description="Helical" evidence="2">
    <location>
        <begin position="79"/>
        <end position="99"/>
    </location>
</feature>
<feature type="topological domain" description="Cytoplasmic" evidence="2">
    <location>
        <begin position="100"/>
        <end position="114"/>
    </location>
</feature>
<feature type="transmembrane region" description="Helical" evidence="2">
    <location>
        <begin position="115"/>
        <end position="135"/>
    </location>
</feature>
<feature type="topological domain" description="Extracellular" evidence="2">
    <location>
        <begin position="136"/>
        <end position="160"/>
    </location>
</feature>
<feature type="transmembrane region" description="Helical" evidence="2">
    <location>
        <begin position="161"/>
        <end position="181"/>
    </location>
</feature>
<feature type="topological domain" description="Cytoplasmic" evidence="2">
    <location>
        <begin position="182"/>
        <end position="195"/>
    </location>
</feature>
<comment type="subunit">
    <text evidence="1">Homodimer and heterodimers.</text>
</comment>
<comment type="subcellular location">
    <subcellularLocation>
        <location evidence="1">Cell membrane</location>
        <topology evidence="1">Multi-pass membrane protein</topology>
    </subcellularLocation>
</comment>
<comment type="similarity">
    <text evidence="3">Belongs to the Casparian strip membrane proteins (CASP) family.</text>
</comment>
<sequence>MDLEKGKKPSEQAAACRIMQVKDKLITLQPVVRACVFLATAVAAVIMGLNKQSYTTVVAIVGTRPVTQTFTAKFKDTPAFVFFVIANAIASGYNLMVLVTRRILQRRAQSLSVHLLDMVILTLLATGSATAASMAQLGKNGNLHARWNPICDKFGSFCNHGGIALVSSFIGVALMLALNLLSAAANSPRSNVTGQ</sequence>
<name>CSPL6_ORYSI</name>
<gene>
    <name type="ORF">OsI_39071</name>
</gene>
<reference key="1">
    <citation type="journal article" date="2005" name="PLoS Biol.">
        <title>The genomes of Oryza sativa: a history of duplications.</title>
        <authorList>
            <person name="Yu J."/>
            <person name="Wang J."/>
            <person name="Lin W."/>
            <person name="Li S."/>
            <person name="Li H."/>
            <person name="Zhou J."/>
            <person name="Ni P."/>
            <person name="Dong W."/>
            <person name="Hu S."/>
            <person name="Zeng C."/>
            <person name="Zhang J."/>
            <person name="Zhang Y."/>
            <person name="Li R."/>
            <person name="Xu Z."/>
            <person name="Li S."/>
            <person name="Li X."/>
            <person name="Zheng H."/>
            <person name="Cong L."/>
            <person name="Lin L."/>
            <person name="Yin J."/>
            <person name="Geng J."/>
            <person name="Li G."/>
            <person name="Shi J."/>
            <person name="Liu J."/>
            <person name="Lv H."/>
            <person name="Li J."/>
            <person name="Wang J."/>
            <person name="Deng Y."/>
            <person name="Ran L."/>
            <person name="Shi X."/>
            <person name="Wang X."/>
            <person name="Wu Q."/>
            <person name="Li C."/>
            <person name="Ren X."/>
            <person name="Wang J."/>
            <person name="Wang X."/>
            <person name="Li D."/>
            <person name="Liu D."/>
            <person name="Zhang X."/>
            <person name="Ji Z."/>
            <person name="Zhao W."/>
            <person name="Sun Y."/>
            <person name="Zhang Z."/>
            <person name="Bao J."/>
            <person name="Han Y."/>
            <person name="Dong L."/>
            <person name="Ji J."/>
            <person name="Chen P."/>
            <person name="Wu S."/>
            <person name="Liu J."/>
            <person name="Xiao Y."/>
            <person name="Bu D."/>
            <person name="Tan J."/>
            <person name="Yang L."/>
            <person name="Ye C."/>
            <person name="Zhang J."/>
            <person name="Xu J."/>
            <person name="Zhou Y."/>
            <person name="Yu Y."/>
            <person name="Zhang B."/>
            <person name="Zhuang S."/>
            <person name="Wei H."/>
            <person name="Liu B."/>
            <person name="Lei M."/>
            <person name="Yu H."/>
            <person name="Li Y."/>
            <person name="Xu H."/>
            <person name="Wei S."/>
            <person name="He X."/>
            <person name="Fang L."/>
            <person name="Zhang Z."/>
            <person name="Zhang Y."/>
            <person name="Huang X."/>
            <person name="Su Z."/>
            <person name="Tong W."/>
            <person name="Li J."/>
            <person name="Tong Z."/>
            <person name="Li S."/>
            <person name="Ye J."/>
            <person name="Wang L."/>
            <person name="Fang L."/>
            <person name="Lei T."/>
            <person name="Chen C.-S."/>
            <person name="Chen H.-C."/>
            <person name="Xu Z."/>
            <person name="Li H."/>
            <person name="Huang H."/>
            <person name="Zhang F."/>
            <person name="Xu H."/>
            <person name="Li N."/>
            <person name="Zhao C."/>
            <person name="Li S."/>
            <person name="Dong L."/>
            <person name="Huang Y."/>
            <person name="Li L."/>
            <person name="Xi Y."/>
            <person name="Qi Q."/>
            <person name="Li W."/>
            <person name="Zhang B."/>
            <person name="Hu W."/>
            <person name="Zhang Y."/>
            <person name="Tian X."/>
            <person name="Jiao Y."/>
            <person name="Liang X."/>
            <person name="Jin J."/>
            <person name="Gao L."/>
            <person name="Zheng W."/>
            <person name="Hao B."/>
            <person name="Liu S.-M."/>
            <person name="Wang W."/>
            <person name="Yuan L."/>
            <person name="Cao M."/>
            <person name="McDermott J."/>
            <person name="Samudrala R."/>
            <person name="Wang J."/>
            <person name="Wong G.K.-S."/>
            <person name="Yang H."/>
        </authorList>
    </citation>
    <scope>NUCLEOTIDE SEQUENCE [LARGE SCALE GENOMIC DNA]</scope>
    <source>
        <strain>cv. 93-11</strain>
    </source>
</reference>
<reference key="2">
    <citation type="journal article" date="2007" name="Plant Mol. Biol.">
        <title>A collection of 10,096 indica rice full-length cDNAs reveals highly expressed sequence divergence between Oryza sativa indica and japonica subspecies.</title>
        <authorList>
            <person name="Liu X."/>
            <person name="Lu T."/>
            <person name="Yu S."/>
            <person name="Li Y."/>
            <person name="Huang Y."/>
            <person name="Huang T."/>
            <person name="Zhang L."/>
            <person name="Zhu J."/>
            <person name="Zhao Q."/>
            <person name="Fan D."/>
            <person name="Mu J."/>
            <person name="Shangguan Y."/>
            <person name="Feng Q."/>
            <person name="Guan J."/>
            <person name="Ying K."/>
            <person name="Zhang Y."/>
            <person name="Lin Z."/>
            <person name="Sun Z."/>
            <person name="Qian Q."/>
            <person name="Lu Y."/>
            <person name="Han B."/>
        </authorList>
    </citation>
    <scope>NUCLEOTIDE SEQUENCE [LARGE SCALE MRNA]</scope>
    <source>
        <strain>cv. Guang-Lu-Ai No.4</strain>
    </source>
</reference>
<reference key="3">
    <citation type="journal article" date="2014" name="Plant Physiol.">
        <title>Functional and evolutionary analysis of the CASPARIAN STRIP MEMBRANE DOMAIN PROTEIN family.</title>
        <authorList>
            <person name="Roppolo D."/>
            <person name="Boeckmann B."/>
            <person name="Pfister A."/>
            <person name="Boutet E."/>
            <person name="Rubio M.C."/>
            <person name="Denervaud-Tendon V."/>
            <person name="Vermeer J.E."/>
            <person name="Gheyselinck J."/>
            <person name="Xenarios I."/>
            <person name="Geldner N."/>
        </authorList>
    </citation>
    <scope>GENE FAMILY</scope>
    <scope>NOMENCLATURE</scope>
</reference>
<dbReference type="EMBL" id="CM000137">
    <property type="protein sequence ID" value="EEC69658.1"/>
    <property type="molecule type" value="Genomic_DNA"/>
</dbReference>
<dbReference type="EMBL" id="CT861929">
    <property type="status" value="NOT_ANNOTATED_CDS"/>
    <property type="molecule type" value="mRNA"/>
</dbReference>
<dbReference type="SMR" id="B8BMY7"/>
<dbReference type="STRING" id="39946.B8BMY7"/>
<dbReference type="EnsemblPlants" id="BGIOSGA035857-TA">
    <property type="protein sequence ID" value="BGIOSGA035857-PA"/>
    <property type="gene ID" value="BGIOSGA035857"/>
</dbReference>
<dbReference type="EnsemblPlants" id="OsMH63_12G020290_01">
    <property type="protein sequence ID" value="OsMH63_12G020290_01"/>
    <property type="gene ID" value="OsMH63_12G020290"/>
</dbReference>
<dbReference type="EnsemblPlants" id="OsZS97_12G019820_01">
    <property type="protein sequence ID" value="OsZS97_12G019820_01"/>
    <property type="gene ID" value="OsZS97_12G019820"/>
</dbReference>
<dbReference type="Gramene" id="BGIOSGA035857-TA">
    <property type="protein sequence ID" value="BGIOSGA035857-PA"/>
    <property type="gene ID" value="BGIOSGA035857"/>
</dbReference>
<dbReference type="Gramene" id="OsMH63_12G020290_01">
    <property type="protein sequence ID" value="OsMH63_12G020290_01"/>
    <property type="gene ID" value="OsMH63_12G020290"/>
</dbReference>
<dbReference type="Gramene" id="OsZS97_12G019820_01">
    <property type="protein sequence ID" value="OsZS97_12G019820_01"/>
    <property type="gene ID" value="OsZS97_12G019820"/>
</dbReference>
<dbReference type="HOGENOM" id="CLU_066104_1_0_1"/>
<dbReference type="OMA" id="EMEFTSF"/>
<dbReference type="Proteomes" id="UP000007015">
    <property type="component" value="Chromosome 12"/>
</dbReference>
<dbReference type="GO" id="GO:0005886">
    <property type="term" value="C:plasma membrane"/>
    <property type="evidence" value="ECO:0007669"/>
    <property type="project" value="UniProtKB-SubCell"/>
</dbReference>
<dbReference type="InterPro" id="IPR006459">
    <property type="entry name" value="CASP/CASPL"/>
</dbReference>
<dbReference type="InterPro" id="IPR006702">
    <property type="entry name" value="CASP_dom"/>
</dbReference>
<dbReference type="InterPro" id="IPR044173">
    <property type="entry name" value="CASPL"/>
</dbReference>
<dbReference type="NCBIfam" id="TIGR01569">
    <property type="entry name" value="A_tha_TIGR01569"/>
    <property type="match status" value="1"/>
</dbReference>
<dbReference type="PANTHER" id="PTHR36488">
    <property type="entry name" value="CASP-LIKE PROTEIN 1U1"/>
    <property type="match status" value="1"/>
</dbReference>
<dbReference type="PANTHER" id="PTHR36488:SF8">
    <property type="entry name" value="CASP-LIKE PROTEIN 1U1"/>
    <property type="match status" value="1"/>
</dbReference>
<dbReference type="Pfam" id="PF04535">
    <property type="entry name" value="CASP_dom"/>
    <property type="match status" value="1"/>
</dbReference>
<proteinExistence type="evidence at transcript level"/>